<dbReference type="EMBL" id="EU085449">
    <property type="protein sequence ID" value="ABW82659.1"/>
    <property type="molecule type" value="mRNA"/>
</dbReference>
<dbReference type="SMR" id="B4XSY7"/>
<dbReference type="GO" id="GO:0005576">
    <property type="term" value="C:extracellular region"/>
    <property type="evidence" value="ECO:0007669"/>
    <property type="project" value="UniProtKB-SubCell"/>
</dbReference>
<dbReference type="GO" id="GO:0090729">
    <property type="term" value="F:toxin activity"/>
    <property type="evidence" value="ECO:0007669"/>
    <property type="project" value="UniProtKB-KW"/>
</dbReference>
<dbReference type="FunFam" id="3.10.100.10:FF:000087">
    <property type="entry name" value="Snaclec rhodocetin subunit delta"/>
    <property type="match status" value="1"/>
</dbReference>
<dbReference type="Gene3D" id="3.10.100.10">
    <property type="entry name" value="Mannose-Binding Protein A, subunit A"/>
    <property type="match status" value="1"/>
</dbReference>
<dbReference type="InterPro" id="IPR001304">
    <property type="entry name" value="C-type_lectin-like"/>
</dbReference>
<dbReference type="InterPro" id="IPR016186">
    <property type="entry name" value="C-type_lectin-like/link_sf"/>
</dbReference>
<dbReference type="InterPro" id="IPR016187">
    <property type="entry name" value="CTDL_fold"/>
</dbReference>
<dbReference type="InterPro" id="IPR050976">
    <property type="entry name" value="Snaclec"/>
</dbReference>
<dbReference type="PANTHER" id="PTHR22991">
    <property type="entry name" value="PROTEIN CBG13490"/>
    <property type="match status" value="1"/>
</dbReference>
<dbReference type="PANTHER" id="PTHR22991:SF40">
    <property type="entry name" value="PROTEIN CBG13490"/>
    <property type="match status" value="1"/>
</dbReference>
<dbReference type="Pfam" id="PF00059">
    <property type="entry name" value="Lectin_C"/>
    <property type="match status" value="1"/>
</dbReference>
<dbReference type="PRINTS" id="PR01504">
    <property type="entry name" value="PNCREATITSAP"/>
</dbReference>
<dbReference type="SMART" id="SM00034">
    <property type="entry name" value="CLECT"/>
    <property type="match status" value="1"/>
</dbReference>
<dbReference type="SUPFAM" id="SSF56436">
    <property type="entry name" value="C-type lectin-like"/>
    <property type="match status" value="1"/>
</dbReference>
<dbReference type="PROSITE" id="PS50041">
    <property type="entry name" value="C_TYPE_LECTIN_2"/>
    <property type="match status" value="1"/>
</dbReference>
<evidence type="ECO:0000250" key="1"/>
<evidence type="ECO:0000255" key="2">
    <source>
        <dbReference type="PROSITE-ProRule" id="PRU00040"/>
    </source>
</evidence>
<evidence type="ECO:0000305" key="3"/>
<reference key="1">
    <citation type="journal article" date="2009" name="Toxicon">
        <title>C-type lectin protein isoforms of Macrovipera lebetina: cDNA cloning and genetic diversity.</title>
        <authorList>
            <person name="Jebali J."/>
            <person name="Bazaa A."/>
            <person name="Sarray S."/>
            <person name="Benhaj K."/>
            <person name="Karboul A."/>
            <person name="El Ayeb M."/>
            <person name="Marrakchi N."/>
            <person name="Gargouri A."/>
        </authorList>
    </citation>
    <scope>NUCLEOTIDE SEQUENCE [MRNA]</scope>
</reference>
<organism>
    <name type="scientific">Macrovipera lebetinus</name>
    <name type="common">Levantine viper</name>
    <name type="synonym">Vipera lebetina</name>
    <dbReference type="NCBI Taxonomy" id="3148341"/>
    <lineage>
        <taxon>Eukaryota</taxon>
        <taxon>Metazoa</taxon>
        <taxon>Chordata</taxon>
        <taxon>Craniata</taxon>
        <taxon>Vertebrata</taxon>
        <taxon>Euteleostomi</taxon>
        <taxon>Lepidosauria</taxon>
        <taxon>Squamata</taxon>
        <taxon>Bifurcata</taxon>
        <taxon>Unidentata</taxon>
        <taxon>Episquamata</taxon>
        <taxon>Toxicofera</taxon>
        <taxon>Serpentes</taxon>
        <taxon>Colubroidea</taxon>
        <taxon>Viperidae</taxon>
        <taxon>Viperinae</taxon>
        <taxon>Macrovipera</taxon>
    </lineage>
</organism>
<accession>B4XSY7</accession>
<protein>
    <recommendedName>
        <fullName>Snaclec A12</fullName>
    </recommendedName>
    <alternativeName>
        <fullName>C-type lectin A12</fullName>
    </alternativeName>
</protein>
<keyword id="KW-1015">Disulfide bond</keyword>
<keyword id="KW-1199">Hemostasis impairing toxin</keyword>
<keyword id="KW-0964">Secreted</keyword>
<keyword id="KW-0732">Signal</keyword>
<keyword id="KW-0800">Toxin</keyword>
<comment type="function">
    <text evidence="1">Interferes with one step of hemostasis (modulation of platelet aggregation, or coagulation cascade, for example).</text>
</comment>
<comment type="subunit">
    <text evidence="1">Heterodimer; disulfide-linked.</text>
</comment>
<comment type="subcellular location">
    <subcellularLocation>
        <location evidence="1">Secreted</location>
    </subcellularLocation>
</comment>
<comment type="tissue specificity">
    <text>Expressed by the venom gland.</text>
</comment>
<comment type="miscellaneous">
    <text>Shows greater sequence similarity to the alpha than beta subunits compared to other heterodimer snaclecs.</text>
</comment>
<comment type="similarity">
    <text evidence="3">Belongs to the snaclec family.</text>
</comment>
<name>SLAC_MACLB</name>
<feature type="signal peptide" evidence="1">
    <location>
        <begin position="1"/>
        <end position="23"/>
    </location>
</feature>
<feature type="chain" id="PRO_0000356328" description="Snaclec A12">
    <location>
        <begin position="24"/>
        <end position="156"/>
    </location>
</feature>
<feature type="domain" description="C-type lectin" evidence="2">
    <location>
        <begin position="34"/>
        <end position="149"/>
    </location>
</feature>
<feature type="disulfide bond" evidence="2">
    <location>
        <begin position="27"/>
        <end position="38"/>
    </location>
</feature>
<feature type="disulfide bond" evidence="2">
    <location>
        <begin position="55"/>
        <end position="148"/>
    </location>
</feature>
<feature type="disulfide bond" description="Interchain" evidence="2">
    <location>
        <position position="102"/>
    </location>
</feature>
<feature type="disulfide bond" evidence="2">
    <location>
        <begin position="123"/>
        <end position="140"/>
    </location>
</feature>
<sequence length="156" mass="17717">MGRSISVSFGLLVVFLSLSGTGADQDCLPGWSFYEGHCYKVFNVKKTWEDAEKFCQKQSNGKHLATIEWLGKANFVAELVTLMKLETHVWIGLRVEDKRQQCSSHWTDGSAVSYENVVHNTKCFGLDQKTGYRTWVALRCELAYHFICMSRVPRGA</sequence>
<proteinExistence type="evidence at transcript level"/>